<evidence type="ECO:0000250" key="1">
    <source>
        <dbReference type="UniProtKB" id="Q39547"/>
    </source>
</evidence>
<evidence type="ECO:0000250" key="2">
    <source>
        <dbReference type="UniProtKB" id="Q84WS0"/>
    </source>
</evidence>
<evidence type="ECO:0000250" key="3">
    <source>
        <dbReference type="UniProtKB" id="Q9MAP7"/>
    </source>
</evidence>
<evidence type="ECO:0000255" key="4"/>
<evidence type="ECO:0000255" key="5">
    <source>
        <dbReference type="PROSITE-ProRule" id="PRU00498"/>
    </source>
</evidence>
<evidence type="ECO:0000255" key="6">
    <source>
        <dbReference type="PROSITE-ProRule" id="PRU01240"/>
    </source>
</evidence>
<evidence type="ECO:0000255" key="7">
    <source>
        <dbReference type="PROSITE-ProRule" id="PRU10082"/>
    </source>
</evidence>
<evidence type="ECO:0000303" key="8">
    <source>
    </source>
</evidence>
<evidence type="ECO:0000305" key="9"/>
<evidence type="ECO:0000312" key="10">
    <source>
        <dbReference type="Araport" id="AT3G14240"/>
    </source>
</evidence>
<evidence type="ECO:0000312" key="11">
    <source>
        <dbReference type="EMBL" id="BAB01030.1"/>
    </source>
</evidence>
<gene>
    <name evidence="8" type="primary">SBT1.5</name>
    <name evidence="10" type="ordered locus">At3g14240</name>
    <name evidence="11" type="ORF">MLN21.2</name>
</gene>
<dbReference type="EC" id="3.4.21.-" evidence="7"/>
<dbReference type="EMBL" id="AB022220">
    <property type="protein sequence ID" value="BAB01030.1"/>
    <property type="molecule type" value="Genomic_DNA"/>
</dbReference>
<dbReference type="EMBL" id="CP002686">
    <property type="protein sequence ID" value="AEE75493.1"/>
    <property type="molecule type" value="Genomic_DNA"/>
</dbReference>
<dbReference type="EMBL" id="AF360129">
    <property type="protein sequence ID" value="AAK25839.1"/>
    <property type="molecule type" value="mRNA"/>
</dbReference>
<dbReference type="EMBL" id="AY084387">
    <property type="protein sequence ID" value="AAM60964.1"/>
    <property type="molecule type" value="mRNA"/>
</dbReference>
<dbReference type="RefSeq" id="NP_566483.1">
    <property type="nucleotide sequence ID" value="NM_112282.3"/>
</dbReference>
<dbReference type="SMR" id="Q9LUM3"/>
<dbReference type="FunCoup" id="Q9LUM3">
    <property type="interactions" value="214"/>
</dbReference>
<dbReference type="STRING" id="3702.Q9LUM3"/>
<dbReference type="MEROPS" id="S08.A44"/>
<dbReference type="GlyCosmos" id="Q9LUM3">
    <property type="glycosylation" value="4 sites, No reported glycans"/>
</dbReference>
<dbReference type="GlyGen" id="Q9LUM3">
    <property type="glycosylation" value="4 sites"/>
</dbReference>
<dbReference type="iPTMnet" id="Q9LUM3"/>
<dbReference type="PaxDb" id="3702-AT3G14240.1"/>
<dbReference type="ProteomicsDB" id="232844"/>
<dbReference type="EnsemblPlants" id="AT3G14240.1">
    <property type="protein sequence ID" value="AT3G14240.1"/>
    <property type="gene ID" value="AT3G14240"/>
</dbReference>
<dbReference type="GeneID" id="820644"/>
<dbReference type="Gramene" id="AT3G14240.1">
    <property type="protein sequence ID" value="AT3G14240.1"/>
    <property type="gene ID" value="AT3G14240"/>
</dbReference>
<dbReference type="KEGG" id="ath:AT3G14240"/>
<dbReference type="Araport" id="AT3G14240"/>
<dbReference type="TAIR" id="AT3G14240"/>
<dbReference type="eggNOG" id="ENOG502QTK5">
    <property type="taxonomic scope" value="Eukaryota"/>
</dbReference>
<dbReference type="HOGENOM" id="CLU_000625_3_1_1"/>
<dbReference type="InParanoid" id="Q9LUM3"/>
<dbReference type="OMA" id="KTHFIRT"/>
<dbReference type="PhylomeDB" id="Q9LUM3"/>
<dbReference type="PRO" id="PR:Q9LUM3"/>
<dbReference type="Proteomes" id="UP000006548">
    <property type="component" value="Chromosome 3"/>
</dbReference>
<dbReference type="ExpressionAtlas" id="Q9LUM3">
    <property type="expression patterns" value="baseline and differential"/>
</dbReference>
<dbReference type="GO" id="GO:0005576">
    <property type="term" value="C:extracellular region"/>
    <property type="evidence" value="ECO:0007669"/>
    <property type="project" value="UniProtKB-SubCell"/>
</dbReference>
<dbReference type="GO" id="GO:0004252">
    <property type="term" value="F:serine-type endopeptidase activity"/>
    <property type="evidence" value="ECO:0007669"/>
    <property type="project" value="InterPro"/>
</dbReference>
<dbReference type="GO" id="GO:0006508">
    <property type="term" value="P:proteolysis"/>
    <property type="evidence" value="ECO:0007669"/>
    <property type="project" value="UniProtKB-KW"/>
</dbReference>
<dbReference type="CDD" id="cd02120">
    <property type="entry name" value="PA_subtilisin_like"/>
    <property type="match status" value="1"/>
</dbReference>
<dbReference type="CDD" id="cd04852">
    <property type="entry name" value="Peptidases_S8_3"/>
    <property type="match status" value="1"/>
</dbReference>
<dbReference type="FunFam" id="2.60.40.2310:FF:000001">
    <property type="entry name" value="Subtilisin-like protease SBT1.5"/>
    <property type="match status" value="1"/>
</dbReference>
<dbReference type="FunFam" id="3.40.50.200:FF:000006">
    <property type="entry name" value="Subtilisin-like protease SBT1.5"/>
    <property type="match status" value="1"/>
</dbReference>
<dbReference type="FunFam" id="3.50.30.30:FF:000005">
    <property type="entry name" value="subtilisin-like protease SBT1.5"/>
    <property type="match status" value="1"/>
</dbReference>
<dbReference type="FunFam" id="3.30.70.80:FF:000003">
    <property type="entry name" value="Subtilisin-like protease SBT1.9"/>
    <property type="match status" value="1"/>
</dbReference>
<dbReference type="Gene3D" id="2.60.40.2310">
    <property type="match status" value="1"/>
</dbReference>
<dbReference type="Gene3D" id="3.50.30.30">
    <property type="match status" value="1"/>
</dbReference>
<dbReference type="Gene3D" id="3.30.70.80">
    <property type="entry name" value="Peptidase S8 propeptide/proteinase inhibitor I9"/>
    <property type="match status" value="1"/>
</dbReference>
<dbReference type="Gene3D" id="3.40.50.200">
    <property type="entry name" value="Peptidase S8/S53 domain"/>
    <property type="match status" value="1"/>
</dbReference>
<dbReference type="InterPro" id="IPR003137">
    <property type="entry name" value="PA_domain"/>
</dbReference>
<dbReference type="InterPro" id="IPR000209">
    <property type="entry name" value="Peptidase_S8/S53_dom"/>
</dbReference>
<dbReference type="InterPro" id="IPR036852">
    <property type="entry name" value="Peptidase_S8/S53_dom_sf"/>
</dbReference>
<dbReference type="InterPro" id="IPR023828">
    <property type="entry name" value="Peptidase_S8_Ser-AS"/>
</dbReference>
<dbReference type="InterPro" id="IPR015500">
    <property type="entry name" value="Peptidase_S8_subtilisin-rel"/>
</dbReference>
<dbReference type="InterPro" id="IPR034197">
    <property type="entry name" value="Peptidases_S8_3"/>
</dbReference>
<dbReference type="InterPro" id="IPR010259">
    <property type="entry name" value="S8pro/Inhibitor_I9"/>
</dbReference>
<dbReference type="InterPro" id="IPR037045">
    <property type="entry name" value="S8pro/Inhibitor_I9_sf"/>
</dbReference>
<dbReference type="InterPro" id="IPR045051">
    <property type="entry name" value="SBT"/>
</dbReference>
<dbReference type="InterPro" id="IPR041469">
    <property type="entry name" value="Subtilisin-like_FN3"/>
</dbReference>
<dbReference type="PANTHER" id="PTHR10795">
    <property type="entry name" value="PROPROTEIN CONVERTASE SUBTILISIN/KEXIN"/>
    <property type="match status" value="1"/>
</dbReference>
<dbReference type="Pfam" id="PF17766">
    <property type="entry name" value="fn3_6"/>
    <property type="match status" value="1"/>
</dbReference>
<dbReference type="Pfam" id="PF05922">
    <property type="entry name" value="Inhibitor_I9"/>
    <property type="match status" value="1"/>
</dbReference>
<dbReference type="Pfam" id="PF02225">
    <property type="entry name" value="PA"/>
    <property type="match status" value="1"/>
</dbReference>
<dbReference type="Pfam" id="PF00082">
    <property type="entry name" value="Peptidase_S8"/>
    <property type="match status" value="1"/>
</dbReference>
<dbReference type="PRINTS" id="PR00723">
    <property type="entry name" value="SUBTILISIN"/>
</dbReference>
<dbReference type="SUPFAM" id="SSF54897">
    <property type="entry name" value="Protease propeptides/inhibitors"/>
    <property type="match status" value="1"/>
</dbReference>
<dbReference type="SUPFAM" id="SSF52743">
    <property type="entry name" value="Subtilisin-like"/>
    <property type="match status" value="1"/>
</dbReference>
<dbReference type="PROSITE" id="PS51892">
    <property type="entry name" value="SUBTILASE"/>
    <property type="match status" value="1"/>
</dbReference>
<dbReference type="PROSITE" id="PS00138">
    <property type="entry name" value="SUBTILASE_SER"/>
    <property type="match status" value="1"/>
</dbReference>
<accession>Q9LUM3</accession>
<accession>Q8LGA0</accession>
<accession>Q9C5N5</accession>
<proteinExistence type="evidence at transcript level"/>
<feature type="signal peptide" evidence="4">
    <location>
        <begin position="1"/>
        <end position="19"/>
    </location>
</feature>
<feature type="propeptide" id="PRO_0000435174" description="Activation peptide" evidence="3">
    <location>
        <begin position="20"/>
        <end position="103"/>
    </location>
</feature>
<feature type="chain" id="PRO_5004330100" description="Subtilisin-like protease SBT1.5">
    <location>
        <begin position="104"/>
        <end status="unknown"/>
    </location>
</feature>
<feature type="propeptide" id="PRO_0000435175" evidence="1">
    <location>
        <begin status="unknown"/>
        <end position="775"/>
    </location>
</feature>
<feature type="domain" description="Inhibitor I9" evidence="4">
    <location>
        <begin position="27"/>
        <end position="103"/>
    </location>
</feature>
<feature type="domain" description="Peptidase S8" evidence="6">
    <location>
        <begin position="107"/>
        <end position="617"/>
    </location>
</feature>
<feature type="domain" description="PA" evidence="4">
    <location>
        <begin position="367"/>
        <end position="459"/>
    </location>
</feature>
<feature type="active site" description="Charge relay system" evidence="6">
    <location>
        <position position="137"/>
    </location>
</feature>
<feature type="active site" description="Charge relay system" evidence="6">
    <location>
        <position position="210"/>
    </location>
</feature>
<feature type="active site" description="Charge relay system" evidence="6">
    <location>
        <position position="549"/>
    </location>
</feature>
<feature type="glycosylation site" description="N-linked (GlcNAc...) asparagine" evidence="5">
    <location>
        <position position="196"/>
    </location>
</feature>
<feature type="glycosylation site" description="N-linked (GlcNAc...) asparagine" evidence="5">
    <location>
        <position position="599"/>
    </location>
</feature>
<feature type="glycosylation site" description="N-linked (GlcNAc...) asparagine" evidence="5">
    <location>
        <position position="638"/>
    </location>
</feature>
<feature type="glycosylation site" description="N-linked (GlcNAc...) asparagine" evidence="5">
    <location>
        <position position="762"/>
    </location>
</feature>
<feature type="sequence conflict" description="In Ref. 3; AAK25839." evidence="9" ref="3">
    <original>F</original>
    <variation>S</variation>
    <location>
        <position position="5"/>
    </location>
</feature>
<feature type="sequence conflict" description="In Ref. 4; AAM60964." evidence="9" ref="4">
    <original>F</original>
    <variation>L</variation>
    <location>
        <position position="45"/>
    </location>
</feature>
<feature type="sequence conflict" description="In Ref. 4; AAM60964." evidence="9" ref="4">
    <original>D</original>
    <variation>N</variation>
    <location>
        <position position="67"/>
    </location>
</feature>
<feature type="sequence conflict" description="In Ref. 4; AAM60964." evidence="9" ref="4">
    <original>K</original>
    <variation>T</variation>
    <location>
        <position position="398"/>
    </location>
</feature>
<feature type="sequence conflict" description="In Ref. 4; AAM60964." evidence="9" ref="4">
    <original>I</original>
    <variation>M</variation>
    <location>
        <position position="579"/>
    </location>
</feature>
<feature type="sequence conflict" description="In Ref. 4; AAM60964." evidence="9" ref="4">
    <original>M</original>
    <variation>T</variation>
    <location>
        <position position="604"/>
    </location>
</feature>
<feature type="sequence conflict" description="In Ref. 4; AAM60964." evidence="9" ref="4">
    <original>K</original>
    <variation>R</variation>
    <location>
        <position position="615"/>
    </location>
</feature>
<feature type="sequence conflict" description="In Ref. 4; AAM60964." evidence="9" ref="4">
    <original>R</original>
    <variation>G</variation>
    <location>
        <position position="641"/>
    </location>
</feature>
<feature type="sequence conflict" description="In Ref. 4; AAM60964." evidence="9" ref="4">
    <original>I</original>
    <variation>M</variation>
    <location>
        <position position="754"/>
    </location>
</feature>
<name>SBT15_ARATH</name>
<organism>
    <name type="scientific">Arabidopsis thaliana</name>
    <name type="common">Mouse-ear cress</name>
    <dbReference type="NCBI Taxonomy" id="3702"/>
    <lineage>
        <taxon>Eukaryota</taxon>
        <taxon>Viridiplantae</taxon>
        <taxon>Streptophyta</taxon>
        <taxon>Embryophyta</taxon>
        <taxon>Tracheophyta</taxon>
        <taxon>Spermatophyta</taxon>
        <taxon>Magnoliopsida</taxon>
        <taxon>eudicotyledons</taxon>
        <taxon>Gunneridae</taxon>
        <taxon>Pentapetalae</taxon>
        <taxon>rosids</taxon>
        <taxon>malvids</taxon>
        <taxon>Brassicales</taxon>
        <taxon>Brassicaceae</taxon>
        <taxon>Camelineae</taxon>
        <taxon>Arabidopsis</taxon>
    </lineage>
</organism>
<comment type="subcellular location">
    <subcellularLocation>
        <location evidence="2">Secreted</location>
    </subcellularLocation>
</comment>
<comment type="similarity">
    <text evidence="9">Belongs to the peptidase S8 family.</text>
</comment>
<sequence length="775" mass="82584">MAFFFYFFFLLTLSSPSSSASSSNSLTYIVHVDHEAKPSIFPTHFHWYTSSLASLTSSPPSIIHTYDTVFHGFSARLTSQDASQLLDHPHVISVIPEQVRHLHTTRSPEFLGLRSTDKAGLLEESDFGSDLVIGVIDTGVWPERPSFDDRGLGPVPIKWKGQCIASQDFPESACNRKLVGARFFCGGYEATNGKMNETTEFRSPRDSDGHGTHTASISAGRYVFPASTLGYAHGVAAGMAPKARLAAYKVCWNSGCYDSDILAAFDTAVADGVDVISLSVGGVVVPYYLDAIAIGAFGAIDRGIFVSASAGNGGPGALTVTNVAPWMTTVGAGTIDRDFPANVKLGNGKMISGVSVYGGPGLDPGRMYPLVYGGSLLGGDGYSSSLCLEGSLDPNLVKGKIVLCDRGINSRATKGEIVRKNGGLGMIIANGVFDGEGLVADCHVLPATSVGASGGDEIRRYISESSKSRSSKHPTATIVFKGTRLGIRPAPVVASFSARGPNPETPEILKPDVIAPGLNILAAWPDRIGPSGVTSDNRRTEFNILSGTSMACPHVSGLAALLKAAHPDWSPAAIRSALITTAYTVDNSGEPMMDESTGNTSSVMDYGSGHVHPTKAMDPGLVYDITSYDYINFLCNSNYTRTNIVTITRRQADCDGARRAGHVGNLNYPSFSVVFQQYGESKMSTHFIRTVTNVGDSDSVYEIKIRPPRGTTVTVEPEKLSFRRVGQKLSFVVRVKTTEVKLSPGATNVETGHIVWSDGKRNVTSPLVVTLQQPL</sequence>
<protein>
    <recommendedName>
        <fullName evidence="8">Subtilisin-like protease SBT1.5</fullName>
        <ecNumber evidence="7">3.4.21.-</ecNumber>
    </recommendedName>
    <alternativeName>
        <fullName evidence="8">Subtilase subfamily 1 member 5</fullName>
        <shortName evidence="8">AtSBT1.5</shortName>
    </alternativeName>
</protein>
<reference key="1">
    <citation type="journal article" date="2000" name="DNA Res.">
        <title>Structural analysis of Arabidopsis thaliana chromosome 3. I. Sequence features of the regions of 4,504,864 bp covered by sixty P1 and TAC clones.</title>
        <authorList>
            <person name="Sato S."/>
            <person name="Nakamura Y."/>
            <person name="Kaneko T."/>
            <person name="Katoh T."/>
            <person name="Asamizu E."/>
            <person name="Tabata S."/>
        </authorList>
    </citation>
    <scope>NUCLEOTIDE SEQUENCE [LARGE SCALE GENOMIC DNA]</scope>
    <source>
        <strain>cv. Columbia</strain>
    </source>
</reference>
<reference key="2">
    <citation type="journal article" date="2017" name="Plant J.">
        <title>Araport11: a complete reannotation of the Arabidopsis thaliana reference genome.</title>
        <authorList>
            <person name="Cheng C.Y."/>
            <person name="Krishnakumar V."/>
            <person name="Chan A.P."/>
            <person name="Thibaud-Nissen F."/>
            <person name="Schobel S."/>
            <person name="Town C.D."/>
        </authorList>
    </citation>
    <scope>GENOME REANNOTATION</scope>
    <source>
        <strain>cv. Columbia</strain>
    </source>
</reference>
<reference key="3">
    <citation type="journal article" date="2003" name="Science">
        <title>Empirical analysis of transcriptional activity in the Arabidopsis genome.</title>
        <authorList>
            <person name="Yamada K."/>
            <person name="Lim J."/>
            <person name="Dale J.M."/>
            <person name="Chen H."/>
            <person name="Shinn P."/>
            <person name="Palm C.J."/>
            <person name="Southwick A.M."/>
            <person name="Wu H.C."/>
            <person name="Kim C.J."/>
            <person name="Nguyen M."/>
            <person name="Pham P.K."/>
            <person name="Cheuk R.F."/>
            <person name="Karlin-Newmann G."/>
            <person name="Liu S.X."/>
            <person name="Lam B."/>
            <person name="Sakano H."/>
            <person name="Wu T."/>
            <person name="Yu G."/>
            <person name="Miranda M."/>
            <person name="Quach H.L."/>
            <person name="Tripp M."/>
            <person name="Chang C.H."/>
            <person name="Lee J.M."/>
            <person name="Toriumi M.J."/>
            <person name="Chan M.M."/>
            <person name="Tang C.C."/>
            <person name="Onodera C.S."/>
            <person name="Deng J.M."/>
            <person name="Akiyama K."/>
            <person name="Ansari Y."/>
            <person name="Arakawa T."/>
            <person name="Banh J."/>
            <person name="Banno F."/>
            <person name="Bowser L."/>
            <person name="Brooks S.Y."/>
            <person name="Carninci P."/>
            <person name="Chao Q."/>
            <person name="Choy N."/>
            <person name="Enju A."/>
            <person name="Goldsmith A.D."/>
            <person name="Gurjal M."/>
            <person name="Hansen N.F."/>
            <person name="Hayashizaki Y."/>
            <person name="Johnson-Hopson C."/>
            <person name="Hsuan V.W."/>
            <person name="Iida K."/>
            <person name="Karnes M."/>
            <person name="Khan S."/>
            <person name="Koesema E."/>
            <person name="Ishida J."/>
            <person name="Jiang P.X."/>
            <person name="Jones T."/>
            <person name="Kawai J."/>
            <person name="Kamiya A."/>
            <person name="Meyers C."/>
            <person name="Nakajima M."/>
            <person name="Narusaka M."/>
            <person name="Seki M."/>
            <person name="Sakurai T."/>
            <person name="Satou M."/>
            <person name="Tamse R."/>
            <person name="Vaysberg M."/>
            <person name="Wallender E.K."/>
            <person name="Wong C."/>
            <person name="Yamamura Y."/>
            <person name="Yuan S."/>
            <person name="Shinozaki K."/>
            <person name="Davis R.W."/>
            <person name="Theologis A."/>
            <person name="Ecker J.R."/>
        </authorList>
    </citation>
    <scope>NUCLEOTIDE SEQUENCE [LARGE SCALE MRNA]</scope>
    <source>
        <strain>cv. Columbia</strain>
    </source>
</reference>
<reference key="4">
    <citation type="submission" date="2002-03" db="EMBL/GenBank/DDBJ databases">
        <title>Full-length cDNA from Arabidopsis thaliana.</title>
        <authorList>
            <person name="Brover V.V."/>
            <person name="Troukhan M.E."/>
            <person name="Alexandrov N.A."/>
            <person name="Lu Y.-P."/>
            <person name="Flavell R.B."/>
            <person name="Feldmann K.A."/>
        </authorList>
    </citation>
    <scope>NUCLEOTIDE SEQUENCE [LARGE SCALE MRNA]</scope>
</reference>
<reference key="5">
    <citation type="journal article" date="2005" name="PLoS Comput. Biol.">
        <title>Inferring hypotheses on functional relationships of genes: Analysis of the Arabidopsis thaliana subtilase gene family.</title>
        <authorList>
            <person name="Rautengarten C."/>
            <person name="Steinhauser D."/>
            <person name="Bussis D."/>
            <person name="Stintzi A."/>
            <person name="Schaller A."/>
            <person name="Kopka J."/>
            <person name="Altmann T."/>
        </authorList>
    </citation>
    <scope>GENE FAMILY</scope>
    <scope>NOMENCLATURE</scope>
</reference>
<keyword id="KW-0068">Autocatalytic cleavage</keyword>
<keyword id="KW-0325">Glycoprotein</keyword>
<keyword id="KW-0378">Hydrolase</keyword>
<keyword id="KW-0645">Protease</keyword>
<keyword id="KW-1185">Reference proteome</keyword>
<keyword id="KW-0964">Secreted</keyword>
<keyword id="KW-0720">Serine protease</keyword>
<keyword id="KW-0732">Signal</keyword>
<keyword id="KW-0865">Zymogen</keyword>